<gene>
    <name evidence="1" type="primary">psaI</name>
</gene>
<protein>
    <recommendedName>
        <fullName evidence="1">Photosystem I reaction center subunit VIII</fullName>
        <shortName evidence="1">PSI-I</shortName>
    </recommendedName>
</protein>
<reference key="1">
    <citation type="journal article" date="2005" name="Mol. Biol. Evol.">
        <title>The chloroplast genome sequence of the green alga Pseudendoclonium akinetum (Ulvophyceae) reveals unusual structural features and new insights into the branching order of chlorophyte lineages.</title>
        <authorList>
            <person name="Pombert J.-F."/>
            <person name="Otis C."/>
            <person name="Lemieux C."/>
            <person name="Turmel M."/>
        </authorList>
    </citation>
    <scope>NUCLEOTIDE SEQUENCE [LARGE SCALE GENOMIC DNA]</scope>
    <source>
        <strain>UTEX 1912</strain>
    </source>
</reference>
<proteinExistence type="inferred from homology"/>
<sequence length="36" mass="3938">MAASFLPSILVPLVGLIFPAIAMTSLFIYIEKQEVN</sequence>
<evidence type="ECO:0000255" key="1">
    <source>
        <dbReference type="HAMAP-Rule" id="MF_00431"/>
    </source>
</evidence>
<organism>
    <name type="scientific">Tupiella akineta</name>
    <name type="common">Green alga</name>
    <name type="synonym">Pseudendoclonium akinetum</name>
    <dbReference type="NCBI Taxonomy" id="160070"/>
    <lineage>
        <taxon>Eukaryota</taxon>
        <taxon>Viridiplantae</taxon>
        <taxon>Chlorophyta</taxon>
        <taxon>Ulvophyceae</taxon>
        <taxon>OUU clade</taxon>
        <taxon>Ulotrichales</taxon>
        <taxon>Tupiellaceae</taxon>
        <taxon>Tupiella</taxon>
    </lineage>
</organism>
<keyword id="KW-0150">Chloroplast</keyword>
<keyword id="KW-0472">Membrane</keyword>
<keyword id="KW-0602">Photosynthesis</keyword>
<keyword id="KW-0603">Photosystem I</keyword>
<keyword id="KW-0934">Plastid</keyword>
<keyword id="KW-0793">Thylakoid</keyword>
<keyword id="KW-0812">Transmembrane</keyword>
<keyword id="KW-1133">Transmembrane helix</keyword>
<feature type="chain" id="PRO_0000276036" description="Photosystem I reaction center subunit VIII">
    <location>
        <begin position="1"/>
        <end position="36"/>
    </location>
</feature>
<feature type="transmembrane region" description="Helical" evidence="1">
    <location>
        <begin position="9"/>
        <end position="29"/>
    </location>
</feature>
<accession>Q3ZJ61</accession>
<name>PSAI_TUPAK</name>
<comment type="function">
    <text evidence="1">May help in the organization of the PsaL subunit.</text>
</comment>
<comment type="subcellular location">
    <subcellularLocation>
        <location evidence="1">Plastid</location>
        <location evidence="1">Chloroplast thylakoid membrane</location>
        <topology evidence="1">Single-pass membrane protein</topology>
    </subcellularLocation>
</comment>
<comment type="similarity">
    <text evidence="1">Belongs to the PsaI family.</text>
</comment>
<dbReference type="EMBL" id="AY835431">
    <property type="protein sequence ID" value="AAV80630.1"/>
    <property type="molecule type" value="Genomic_DNA"/>
</dbReference>
<dbReference type="RefSeq" id="YP_636206.1">
    <property type="nucleotide sequence ID" value="NC_008114.1"/>
</dbReference>
<dbReference type="SMR" id="Q3ZJ61"/>
<dbReference type="GeneID" id="4108810"/>
<dbReference type="GO" id="GO:0009535">
    <property type="term" value="C:chloroplast thylakoid membrane"/>
    <property type="evidence" value="ECO:0007669"/>
    <property type="project" value="UniProtKB-SubCell"/>
</dbReference>
<dbReference type="GO" id="GO:0009522">
    <property type="term" value="C:photosystem I"/>
    <property type="evidence" value="ECO:0007669"/>
    <property type="project" value="UniProtKB-KW"/>
</dbReference>
<dbReference type="GO" id="GO:0015979">
    <property type="term" value="P:photosynthesis"/>
    <property type="evidence" value="ECO:0007669"/>
    <property type="project" value="UniProtKB-UniRule"/>
</dbReference>
<dbReference type="HAMAP" id="MF_00431">
    <property type="entry name" value="PSI_PsaI"/>
    <property type="match status" value="1"/>
</dbReference>
<dbReference type="InterPro" id="IPR001302">
    <property type="entry name" value="PSI_PsaI"/>
</dbReference>
<dbReference type="InterPro" id="IPR036357">
    <property type="entry name" value="PSI_PsaI_sf"/>
</dbReference>
<dbReference type="NCBIfam" id="NF008830">
    <property type="entry name" value="PRK11877.1"/>
    <property type="match status" value="1"/>
</dbReference>
<dbReference type="NCBIfam" id="TIGR03052">
    <property type="entry name" value="PS_I_psaI"/>
    <property type="match status" value="1"/>
</dbReference>
<dbReference type="PANTHER" id="PTHR35775">
    <property type="match status" value="1"/>
</dbReference>
<dbReference type="PANTHER" id="PTHR35775:SF2">
    <property type="entry name" value="PHOTOSYSTEM I REACTION CENTER SUBUNIT VIII"/>
    <property type="match status" value="1"/>
</dbReference>
<dbReference type="Pfam" id="PF00796">
    <property type="entry name" value="PSI_8"/>
    <property type="match status" value="1"/>
</dbReference>
<dbReference type="SUPFAM" id="SSF81540">
    <property type="entry name" value="Subunit VIII of photosystem I reaction centre, PsaI"/>
    <property type="match status" value="1"/>
</dbReference>
<geneLocation type="chloroplast"/>